<evidence type="ECO:0000255" key="1">
    <source>
        <dbReference type="HAMAP-Rule" id="MF_00294"/>
    </source>
</evidence>
<evidence type="ECO:0000305" key="2"/>
<accession>Q5N502</accession>
<protein>
    <recommendedName>
        <fullName evidence="1">Large ribosomal subunit protein bL33</fullName>
    </recommendedName>
    <alternativeName>
        <fullName evidence="2">50S ribosomal protein L33</fullName>
    </alternativeName>
</protein>
<dbReference type="EMBL" id="AP008231">
    <property type="protein sequence ID" value="BAD78617.1"/>
    <property type="molecule type" value="Genomic_DNA"/>
</dbReference>
<dbReference type="RefSeq" id="WP_011242739.1">
    <property type="nucleotide sequence ID" value="NZ_CP085785.1"/>
</dbReference>
<dbReference type="GeneID" id="72429975"/>
<dbReference type="KEGG" id="syc:syc0427_c"/>
<dbReference type="eggNOG" id="COG0267">
    <property type="taxonomic scope" value="Bacteria"/>
</dbReference>
<dbReference type="Proteomes" id="UP000001175">
    <property type="component" value="Chromosome"/>
</dbReference>
<dbReference type="GO" id="GO:0005737">
    <property type="term" value="C:cytoplasm"/>
    <property type="evidence" value="ECO:0007669"/>
    <property type="project" value="UniProtKB-ARBA"/>
</dbReference>
<dbReference type="GO" id="GO:1990904">
    <property type="term" value="C:ribonucleoprotein complex"/>
    <property type="evidence" value="ECO:0007669"/>
    <property type="project" value="UniProtKB-KW"/>
</dbReference>
<dbReference type="GO" id="GO:0005840">
    <property type="term" value="C:ribosome"/>
    <property type="evidence" value="ECO:0007669"/>
    <property type="project" value="UniProtKB-KW"/>
</dbReference>
<dbReference type="GO" id="GO:0003735">
    <property type="term" value="F:structural constituent of ribosome"/>
    <property type="evidence" value="ECO:0007669"/>
    <property type="project" value="InterPro"/>
</dbReference>
<dbReference type="GO" id="GO:0006412">
    <property type="term" value="P:translation"/>
    <property type="evidence" value="ECO:0007669"/>
    <property type="project" value="UniProtKB-UniRule"/>
</dbReference>
<dbReference type="Gene3D" id="2.20.28.120">
    <property type="entry name" value="Ribosomal protein L33"/>
    <property type="match status" value="1"/>
</dbReference>
<dbReference type="HAMAP" id="MF_00294">
    <property type="entry name" value="Ribosomal_bL33"/>
    <property type="match status" value="1"/>
</dbReference>
<dbReference type="InterPro" id="IPR001705">
    <property type="entry name" value="Ribosomal_bL33"/>
</dbReference>
<dbReference type="InterPro" id="IPR018264">
    <property type="entry name" value="Ribosomal_bL33_CS"/>
</dbReference>
<dbReference type="InterPro" id="IPR038584">
    <property type="entry name" value="Ribosomal_bL33_sf"/>
</dbReference>
<dbReference type="InterPro" id="IPR011332">
    <property type="entry name" value="Ribosomal_zn-bd"/>
</dbReference>
<dbReference type="NCBIfam" id="NF001764">
    <property type="entry name" value="PRK00504.1"/>
    <property type="match status" value="1"/>
</dbReference>
<dbReference type="NCBIfam" id="NF001860">
    <property type="entry name" value="PRK00595.1"/>
    <property type="match status" value="1"/>
</dbReference>
<dbReference type="NCBIfam" id="TIGR01023">
    <property type="entry name" value="rpmG_bact"/>
    <property type="match status" value="1"/>
</dbReference>
<dbReference type="PANTHER" id="PTHR43168">
    <property type="entry name" value="50S RIBOSOMAL PROTEIN L33, CHLOROPLASTIC"/>
    <property type="match status" value="1"/>
</dbReference>
<dbReference type="PANTHER" id="PTHR43168:SF2">
    <property type="entry name" value="LARGE RIBOSOMAL SUBUNIT PROTEIN BL33C"/>
    <property type="match status" value="1"/>
</dbReference>
<dbReference type="Pfam" id="PF00471">
    <property type="entry name" value="Ribosomal_L33"/>
    <property type="match status" value="1"/>
</dbReference>
<dbReference type="SUPFAM" id="SSF57829">
    <property type="entry name" value="Zn-binding ribosomal proteins"/>
    <property type="match status" value="1"/>
</dbReference>
<dbReference type="PROSITE" id="PS00582">
    <property type="entry name" value="RIBOSOMAL_L33"/>
    <property type="match status" value="1"/>
</dbReference>
<keyword id="KW-0687">Ribonucleoprotein</keyword>
<keyword id="KW-0689">Ribosomal protein</keyword>
<organism>
    <name type="scientific">Synechococcus sp. (strain ATCC 27144 / PCC 6301 / SAUG 1402/1)</name>
    <name type="common">Anacystis nidulans</name>
    <dbReference type="NCBI Taxonomy" id="269084"/>
    <lineage>
        <taxon>Bacteria</taxon>
        <taxon>Bacillati</taxon>
        <taxon>Cyanobacteriota</taxon>
        <taxon>Cyanophyceae</taxon>
        <taxon>Synechococcales</taxon>
        <taxon>Synechococcaceae</taxon>
        <taxon>Synechococcus</taxon>
    </lineage>
</organism>
<feature type="chain" id="PRO_1000004199" description="Large ribosomal subunit protein bL33">
    <location>
        <begin position="1"/>
        <end position="64"/>
    </location>
</feature>
<name>RL33_SYNP6</name>
<gene>
    <name evidence="1" type="primary">rpmG</name>
    <name evidence="1" type="synonym">rpl33</name>
    <name type="ordered locus">syc0427_c</name>
</gene>
<sequence>MAKAKGARIVITLECTECRSNTAKRSPGVSRYTTQKNRRNTTERLEIKKFCPHCNKHTAHKEIK</sequence>
<comment type="similarity">
    <text evidence="1">Belongs to the bacterial ribosomal protein bL33 family.</text>
</comment>
<reference key="1">
    <citation type="journal article" date="2007" name="Photosyn. Res.">
        <title>Complete nucleotide sequence of the freshwater unicellular cyanobacterium Synechococcus elongatus PCC 6301 chromosome: gene content and organization.</title>
        <authorList>
            <person name="Sugita C."/>
            <person name="Ogata K."/>
            <person name="Shikata M."/>
            <person name="Jikuya H."/>
            <person name="Takano J."/>
            <person name="Furumichi M."/>
            <person name="Kanehisa M."/>
            <person name="Omata T."/>
            <person name="Sugiura M."/>
            <person name="Sugita M."/>
        </authorList>
    </citation>
    <scope>NUCLEOTIDE SEQUENCE [LARGE SCALE GENOMIC DNA]</scope>
    <source>
        <strain>ATCC 27144 / PCC 6301 / SAUG 1402/1</strain>
    </source>
</reference>
<proteinExistence type="inferred from homology"/>